<accession>P69755</accession>
<keyword id="KW-0165">Cleavage on pair of basic residues</keyword>
<keyword id="KW-1015">Disulfide bond</keyword>
<keyword id="KW-0379">Hydroxylation</keyword>
<keyword id="KW-0872">Ion channel impairing toxin</keyword>
<keyword id="KW-0960">Knottin</keyword>
<keyword id="KW-0528">Neurotoxin</keyword>
<keyword id="KW-0638">Presynaptic neurotoxin</keyword>
<keyword id="KW-0964">Secreted</keyword>
<keyword id="KW-0732">Signal</keyword>
<keyword id="KW-0800">Toxin</keyword>
<keyword id="KW-0738">Voltage-gated sodium channel impairing toxin</keyword>
<comment type="function">
    <text evidence="1">Delta-conotoxins bind to site 6 of voltage-gated sodium channels (Nav) and inhibit the inactivation process.</text>
</comment>
<comment type="subcellular location">
    <subcellularLocation>
        <location evidence="1">Secreted</location>
    </subcellularLocation>
</comment>
<comment type="tissue specificity">
    <text>Expressed by the venom duct.</text>
</comment>
<comment type="domain">
    <text evidence="1">The presence of a 'disulfide through disulfide knot' structurally defines this protein as a knottin.</text>
</comment>
<comment type="domain">
    <text>The cysteine framework is VI/VII (C-C-CC-C-C).</text>
</comment>
<comment type="similarity">
    <text evidence="3">Belongs to the conotoxin O1 superfamily.</text>
</comment>
<dbReference type="EMBL" id="DJ379435">
    <property type="status" value="NOT_ANNOTATED_CDS"/>
    <property type="molecule type" value="Unassigned_DNA"/>
</dbReference>
<dbReference type="SMR" id="P69755"/>
<dbReference type="ConoServer" id="1622">
    <property type="toxin name" value="MVIC"/>
</dbReference>
<dbReference type="GO" id="GO:0005576">
    <property type="term" value="C:extracellular region"/>
    <property type="evidence" value="ECO:0007669"/>
    <property type="project" value="UniProtKB-SubCell"/>
</dbReference>
<dbReference type="GO" id="GO:0044231">
    <property type="term" value="C:host cell presynaptic membrane"/>
    <property type="evidence" value="ECO:0007669"/>
    <property type="project" value="UniProtKB-KW"/>
</dbReference>
<dbReference type="GO" id="GO:0019871">
    <property type="term" value="F:sodium channel inhibitor activity"/>
    <property type="evidence" value="ECO:0007669"/>
    <property type="project" value="InterPro"/>
</dbReference>
<dbReference type="GO" id="GO:0090729">
    <property type="term" value="F:toxin activity"/>
    <property type="evidence" value="ECO:0007669"/>
    <property type="project" value="UniProtKB-KW"/>
</dbReference>
<dbReference type="InterPro" id="IPR004214">
    <property type="entry name" value="Conotoxin"/>
</dbReference>
<dbReference type="InterPro" id="IPR012322">
    <property type="entry name" value="Conotoxin_d-typ_CS"/>
</dbReference>
<dbReference type="InterPro" id="IPR012321">
    <property type="entry name" value="Conotoxin_omega-typ_CS"/>
</dbReference>
<dbReference type="Pfam" id="PF02950">
    <property type="entry name" value="Conotoxin"/>
    <property type="match status" value="1"/>
</dbReference>
<dbReference type="PROSITE" id="PS60005">
    <property type="entry name" value="DELTA_CONOTOXIN"/>
    <property type="match status" value="1"/>
</dbReference>
<reference key="1">
    <citation type="patent" date="2003-11-11" number="JP2003533178">
        <title>O-superfamily conotoxin peptides.</title>
        <authorList>
            <person name="Hillyard D.R."/>
            <person name="Mcintosh M.J."/>
            <person name="Jones R.M."/>
            <person name="Cartier E.G."/>
            <person name="Watkins M."/>
            <person name="Olivera B.M."/>
            <person name="Layer R.T."/>
        </authorList>
    </citation>
    <scope>NUCLEOTIDE SEQUENCE</scope>
</reference>
<reference key="2">
    <citation type="journal article" date="2001" name="Biochemistry">
        <title>Delta-conotoxin structure/function through a cladistic analysis.</title>
        <authorList>
            <person name="Bulaj G."/>
            <person name="DeLaCruz R."/>
            <person name="Azimi-Zonooz A."/>
            <person name="West P."/>
            <person name="Watkins M."/>
            <person name="Yoshikami D."/>
            <person name="Olivera B.M."/>
        </authorList>
    </citation>
    <scope>NUCLEOTIDE SEQUENCE [MRNA]</scope>
    <source>
        <tissue>Venom duct</tissue>
    </source>
</reference>
<organism>
    <name type="scientific">Conus magus</name>
    <name type="common">Magical cone</name>
    <dbReference type="NCBI Taxonomy" id="6492"/>
    <lineage>
        <taxon>Eukaryota</taxon>
        <taxon>Metazoa</taxon>
        <taxon>Spiralia</taxon>
        <taxon>Lophotrochozoa</taxon>
        <taxon>Mollusca</taxon>
        <taxon>Gastropoda</taxon>
        <taxon>Caenogastropoda</taxon>
        <taxon>Neogastropoda</taxon>
        <taxon>Conoidea</taxon>
        <taxon>Conidae</taxon>
        <taxon>Conus</taxon>
        <taxon>Pionoconus</taxon>
    </lineage>
</organism>
<name>O16C_CONMA</name>
<protein>
    <recommendedName>
        <fullName>Delta-conotoxin-like MVIC</fullName>
        <shortName>Delta-MVIC</shortName>
    </recommendedName>
</protein>
<evidence type="ECO:0000250" key="1"/>
<evidence type="ECO:0000255" key="2"/>
<evidence type="ECO:0000305" key="3"/>
<proteinExistence type="evidence at transcript level"/>
<sequence>MKLTCVMIVAVLFLTTWTFVTADDSRYGLKNLFPKARHEMKNPEASKLNKRDECYPPGTFCGIKPGLCCSAICLSFVCISFDF</sequence>
<feature type="signal peptide" evidence="2">
    <location>
        <begin position="1"/>
        <end position="22"/>
    </location>
</feature>
<feature type="propeptide" id="PRO_0000392702" evidence="1">
    <location>
        <begin position="23"/>
        <end position="49"/>
    </location>
</feature>
<feature type="peptide" id="PRO_0000044871" description="Delta-conotoxin-like MVIC">
    <location>
        <begin position="52"/>
        <end position="83"/>
    </location>
</feature>
<feature type="modified residue" description="4-hydroxyproline" evidence="1">
    <location>
        <position position="56"/>
    </location>
</feature>
<feature type="modified residue" description="4-hydroxyproline" evidence="1">
    <location>
        <position position="65"/>
    </location>
</feature>
<feature type="disulfide bond" evidence="1">
    <location>
        <begin position="54"/>
        <end position="69"/>
    </location>
</feature>
<feature type="disulfide bond" evidence="1">
    <location>
        <begin position="61"/>
        <end position="73"/>
    </location>
</feature>
<feature type="disulfide bond" evidence="1">
    <location>
        <begin position="68"/>
        <end position="78"/>
    </location>
</feature>